<sequence>MPRVKTGIVRRRRHKKVLKRAKGFWGSRSKQYRNAFQTLLNAATYEYRDRRNKKRDFRRLWIQRINAGARLHGMNYSTFINGLKVAGVDLNRKVLADIAAREPEAFQVLVNTAKGARNG</sequence>
<name>RL20_DEIGD</name>
<gene>
    <name evidence="1" type="primary">rplT</name>
    <name type="ordered locus">Dgeo_0574</name>
</gene>
<accession>Q1J0V8</accession>
<organism>
    <name type="scientific">Deinococcus geothermalis (strain DSM 11300 / CIP 105573 / AG-3a)</name>
    <dbReference type="NCBI Taxonomy" id="319795"/>
    <lineage>
        <taxon>Bacteria</taxon>
        <taxon>Thermotogati</taxon>
        <taxon>Deinococcota</taxon>
        <taxon>Deinococci</taxon>
        <taxon>Deinococcales</taxon>
        <taxon>Deinococcaceae</taxon>
        <taxon>Deinococcus</taxon>
    </lineage>
</organism>
<feature type="chain" id="PRO_1000048967" description="Large ribosomal subunit protein bL20">
    <location>
        <begin position="1"/>
        <end position="119"/>
    </location>
</feature>
<reference key="1">
    <citation type="submission" date="2006-04" db="EMBL/GenBank/DDBJ databases">
        <title>Complete sequence of chromosome of Deinococcus geothermalis DSM 11300.</title>
        <authorList>
            <person name="Copeland A."/>
            <person name="Lucas S."/>
            <person name="Lapidus A."/>
            <person name="Barry K."/>
            <person name="Detter J.C."/>
            <person name="Glavina del Rio T."/>
            <person name="Hammon N."/>
            <person name="Israni S."/>
            <person name="Dalin E."/>
            <person name="Tice H."/>
            <person name="Pitluck S."/>
            <person name="Brettin T."/>
            <person name="Bruce D."/>
            <person name="Han C."/>
            <person name="Tapia R."/>
            <person name="Saunders E."/>
            <person name="Gilna P."/>
            <person name="Schmutz J."/>
            <person name="Larimer F."/>
            <person name="Land M."/>
            <person name="Hauser L."/>
            <person name="Kyrpides N."/>
            <person name="Kim E."/>
            <person name="Daly M.J."/>
            <person name="Fredrickson J.K."/>
            <person name="Makarova K.S."/>
            <person name="Gaidamakova E.K."/>
            <person name="Zhai M."/>
            <person name="Richardson P."/>
        </authorList>
    </citation>
    <scope>NUCLEOTIDE SEQUENCE [LARGE SCALE GENOMIC DNA]</scope>
    <source>
        <strain>DSM 11300 / CIP 105573 / AG-3a</strain>
    </source>
</reference>
<dbReference type="EMBL" id="CP000359">
    <property type="protein sequence ID" value="ABF44876.1"/>
    <property type="molecule type" value="Genomic_DNA"/>
</dbReference>
<dbReference type="RefSeq" id="WP_011529718.1">
    <property type="nucleotide sequence ID" value="NC_008025.1"/>
</dbReference>
<dbReference type="SMR" id="Q1J0V8"/>
<dbReference type="STRING" id="319795.Dgeo_0574"/>
<dbReference type="KEGG" id="dge:Dgeo_0574"/>
<dbReference type="eggNOG" id="COG0292">
    <property type="taxonomic scope" value="Bacteria"/>
</dbReference>
<dbReference type="HOGENOM" id="CLU_123265_0_1_0"/>
<dbReference type="Proteomes" id="UP000002431">
    <property type="component" value="Chromosome"/>
</dbReference>
<dbReference type="GO" id="GO:1990904">
    <property type="term" value="C:ribonucleoprotein complex"/>
    <property type="evidence" value="ECO:0007669"/>
    <property type="project" value="UniProtKB-KW"/>
</dbReference>
<dbReference type="GO" id="GO:0005840">
    <property type="term" value="C:ribosome"/>
    <property type="evidence" value="ECO:0007669"/>
    <property type="project" value="UniProtKB-KW"/>
</dbReference>
<dbReference type="GO" id="GO:0019843">
    <property type="term" value="F:rRNA binding"/>
    <property type="evidence" value="ECO:0007669"/>
    <property type="project" value="UniProtKB-UniRule"/>
</dbReference>
<dbReference type="GO" id="GO:0003735">
    <property type="term" value="F:structural constituent of ribosome"/>
    <property type="evidence" value="ECO:0007669"/>
    <property type="project" value="InterPro"/>
</dbReference>
<dbReference type="GO" id="GO:0000027">
    <property type="term" value="P:ribosomal large subunit assembly"/>
    <property type="evidence" value="ECO:0007669"/>
    <property type="project" value="UniProtKB-UniRule"/>
</dbReference>
<dbReference type="GO" id="GO:0006412">
    <property type="term" value="P:translation"/>
    <property type="evidence" value="ECO:0007669"/>
    <property type="project" value="InterPro"/>
</dbReference>
<dbReference type="CDD" id="cd07026">
    <property type="entry name" value="Ribosomal_L20"/>
    <property type="match status" value="1"/>
</dbReference>
<dbReference type="FunFam" id="1.10.1900.20:FF:000001">
    <property type="entry name" value="50S ribosomal protein L20"/>
    <property type="match status" value="1"/>
</dbReference>
<dbReference type="Gene3D" id="6.10.160.10">
    <property type="match status" value="1"/>
</dbReference>
<dbReference type="Gene3D" id="1.10.1900.20">
    <property type="entry name" value="Ribosomal protein L20"/>
    <property type="match status" value="1"/>
</dbReference>
<dbReference type="HAMAP" id="MF_00382">
    <property type="entry name" value="Ribosomal_bL20"/>
    <property type="match status" value="1"/>
</dbReference>
<dbReference type="InterPro" id="IPR005813">
    <property type="entry name" value="Ribosomal_bL20"/>
</dbReference>
<dbReference type="InterPro" id="IPR049946">
    <property type="entry name" value="RIBOSOMAL_L20_CS"/>
</dbReference>
<dbReference type="InterPro" id="IPR035566">
    <property type="entry name" value="Ribosomal_protein_bL20_C"/>
</dbReference>
<dbReference type="NCBIfam" id="TIGR01032">
    <property type="entry name" value="rplT_bact"/>
    <property type="match status" value="1"/>
</dbReference>
<dbReference type="PANTHER" id="PTHR10986">
    <property type="entry name" value="39S RIBOSOMAL PROTEIN L20"/>
    <property type="match status" value="1"/>
</dbReference>
<dbReference type="Pfam" id="PF00453">
    <property type="entry name" value="Ribosomal_L20"/>
    <property type="match status" value="1"/>
</dbReference>
<dbReference type="PRINTS" id="PR00062">
    <property type="entry name" value="RIBOSOMALL20"/>
</dbReference>
<dbReference type="SUPFAM" id="SSF74731">
    <property type="entry name" value="Ribosomal protein L20"/>
    <property type="match status" value="1"/>
</dbReference>
<dbReference type="PROSITE" id="PS00937">
    <property type="entry name" value="RIBOSOMAL_L20"/>
    <property type="match status" value="1"/>
</dbReference>
<proteinExistence type="inferred from homology"/>
<evidence type="ECO:0000255" key="1">
    <source>
        <dbReference type="HAMAP-Rule" id="MF_00382"/>
    </source>
</evidence>
<evidence type="ECO:0000305" key="2"/>
<comment type="function">
    <text evidence="1">Binds directly to 23S ribosomal RNA and is necessary for the in vitro assembly process of the 50S ribosomal subunit. It is not involved in the protein synthesizing functions of that subunit.</text>
</comment>
<comment type="similarity">
    <text evidence="1">Belongs to the bacterial ribosomal protein bL20 family.</text>
</comment>
<keyword id="KW-0687">Ribonucleoprotein</keyword>
<keyword id="KW-0689">Ribosomal protein</keyword>
<keyword id="KW-0694">RNA-binding</keyword>
<keyword id="KW-0699">rRNA-binding</keyword>
<protein>
    <recommendedName>
        <fullName evidence="1">Large ribosomal subunit protein bL20</fullName>
    </recommendedName>
    <alternativeName>
        <fullName evidence="2">50S ribosomal protein L20</fullName>
    </alternativeName>
</protein>